<organism>
    <name type="scientific">Arabidopsis thaliana</name>
    <name type="common">Mouse-ear cress</name>
    <dbReference type="NCBI Taxonomy" id="3702"/>
    <lineage>
        <taxon>Eukaryota</taxon>
        <taxon>Viridiplantae</taxon>
        <taxon>Streptophyta</taxon>
        <taxon>Embryophyta</taxon>
        <taxon>Tracheophyta</taxon>
        <taxon>Spermatophyta</taxon>
        <taxon>Magnoliopsida</taxon>
        <taxon>eudicotyledons</taxon>
        <taxon>Gunneridae</taxon>
        <taxon>Pentapetalae</taxon>
        <taxon>rosids</taxon>
        <taxon>malvids</taxon>
        <taxon>Brassicales</taxon>
        <taxon>Brassicaceae</taxon>
        <taxon>Camelineae</taxon>
        <taxon>Arabidopsis</taxon>
    </lineage>
</organism>
<keyword id="KW-1185">Reference proteome</keyword>
<feature type="chain" id="PRO_0000283562" description="Putative F-box protein At5g60560">
    <location>
        <begin position="1"/>
        <end position="407"/>
    </location>
</feature>
<feature type="domain" description="F-box">
    <location>
        <begin position="2"/>
        <end position="49"/>
    </location>
</feature>
<reference key="1">
    <citation type="journal article" date="1998" name="DNA Res.">
        <title>Structural analysis of Arabidopsis thaliana chromosome 5. V. Sequence features of the regions of 1,381,565 bp covered by twenty one physically assigned P1 and TAC clones.</title>
        <authorList>
            <person name="Kaneko T."/>
            <person name="Kotani H."/>
            <person name="Nakamura Y."/>
            <person name="Sato S."/>
            <person name="Asamizu E."/>
            <person name="Miyajima N."/>
            <person name="Tabata S."/>
        </authorList>
    </citation>
    <scope>NUCLEOTIDE SEQUENCE [LARGE SCALE GENOMIC DNA]</scope>
    <source>
        <strain>cv. Columbia</strain>
    </source>
</reference>
<reference key="2">
    <citation type="journal article" date="2017" name="Plant J.">
        <title>Araport11: a complete reannotation of the Arabidopsis thaliana reference genome.</title>
        <authorList>
            <person name="Cheng C.Y."/>
            <person name="Krishnakumar V."/>
            <person name="Chan A.P."/>
            <person name="Thibaud-Nissen F."/>
            <person name="Schobel S."/>
            <person name="Town C.D."/>
        </authorList>
    </citation>
    <scope>GENOME REANNOTATION</scope>
    <source>
        <strain>cv. Columbia</strain>
    </source>
</reference>
<accession>Q9FKJ1</accession>
<accession>F4JZ09</accession>
<dbReference type="EMBL" id="AB011483">
    <property type="protein sequence ID" value="BAB08239.1"/>
    <property type="molecule type" value="Genomic_DNA"/>
</dbReference>
<dbReference type="EMBL" id="CP002688">
    <property type="protein sequence ID" value="AED97345.1"/>
    <property type="status" value="ALT_SEQ"/>
    <property type="molecule type" value="Genomic_DNA"/>
</dbReference>
<dbReference type="EMBL" id="CP002688">
    <property type="protein sequence ID" value="ANM68290.1"/>
    <property type="molecule type" value="Genomic_DNA"/>
</dbReference>
<dbReference type="RefSeq" id="NP_001330054.1">
    <property type="nucleotide sequence ID" value="NM_001345423.1"/>
</dbReference>
<dbReference type="RefSeq" id="NP_200864.1">
    <property type="nucleotide sequence ID" value="NM_125449.1"/>
</dbReference>
<dbReference type="FunCoup" id="Q9FKJ1">
    <property type="interactions" value="1"/>
</dbReference>
<dbReference type="PaxDb" id="3702-AT5G60560.1"/>
<dbReference type="EnsemblPlants" id="AT5G60560.2">
    <property type="protein sequence ID" value="AT5G60560.2"/>
    <property type="gene ID" value="AT5G60560"/>
</dbReference>
<dbReference type="GeneID" id="836177"/>
<dbReference type="Gramene" id="AT5G60560.2">
    <property type="protein sequence ID" value="AT5G60560.2"/>
    <property type="gene ID" value="AT5G60560"/>
</dbReference>
<dbReference type="KEGG" id="ath:AT5G60560"/>
<dbReference type="Araport" id="AT5G60560"/>
<dbReference type="TAIR" id="AT5G60560"/>
<dbReference type="HOGENOM" id="CLU_034692_0_0_1"/>
<dbReference type="InParanoid" id="Q9FKJ1"/>
<dbReference type="PhylomeDB" id="Q9FKJ1"/>
<dbReference type="PRO" id="PR:Q9FKJ1"/>
<dbReference type="Proteomes" id="UP000006548">
    <property type="component" value="Chromosome 5"/>
</dbReference>
<dbReference type="ExpressionAtlas" id="Q9FKJ1">
    <property type="expression patterns" value="baseline and differential"/>
</dbReference>
<dbReference type="InterPro" id="IPR006527">
    <property type="entry name" value="F-box-assoc_dom_typ1"/>
</dbReference>
<dbReference type="InterPro" id="IPR017451">
    <property type="entry name" value="F-box-assoc_interact_dom"/>
</dbReference>
<dbReference type="InterPro" id="IPR036047">
    <property type="entry name" value="F-box-like_dom_sf"/>
</dbReference>
<dbReference type="InterPro" id="IPR001810">
    <property type="entry name" value="F-box_dom"/>
</dbReference>
<dbReference type="InterPro" id="IPR011043">
    <property type="entry name" value="Gal_Oxase/kelch_b-propeller"/>
</dbReference>
<dbReference type="InterPro" id="IPR050796">
    <property type="entry name" value="SCF_F-box_component"/>
</dbReference>
<dbReference type="NCBIfam" id="TIGR01640">
    <property type="entry name" value="F_box_assoc_1"/>
    <property type="match status" value="1"/>
</dbReference>
<dbReference type="PANTHER" id="PTHR31672">
    <property type="entry name" value="BNACNNG10540D PROTEIN"/>
    <property type="match status" value="1"/>
</dbReference>
<dbReference type="PANTHER" id="PTHR31672:SF13">
    <property type="entry name" value="F-BOX PROTEIN CPR30-LIKE"/>
    <property type="match status" value="1"/>
</dbReference>
<dbReference type="Pfam" id="PF00646">
    <property type="entry name" value="F-box"/>
    <property type="match status" value="1"/>
</dbReference>
<dbReference type="Pfam" id="PF07734">
    <property type="entry name" value="FBA_1"/>
    <property type="match status" value="1"/>
</dbReference>
<dbReference type="SMART" id="SM00256">
    <property type="entry name" value="FBOX"/>
    <property type="match status" value="1"/>
</dbReference>
<dbReference type="SUPFAM" id="SSF81383">
    <property type="entry name" value="F-box domain"/>
    <property type="match status" value="1"/>
</dbReference>
<dbReference type="SUPFAM" id="SSF50965">
    <property type="entry name" value="Galactose oxidase, central domain"/>
    <property type="match status" value="1"/>
</dbReference>
<protein>
    <recommendedName>
        <fullName>Putative F-box protein At5g60560</fullName>
    </recommendedName>
</protein>
<sequence length="407" mass="46911">MTMMSDLSEDLVEEILCRVSITSLGAVRSTCKGWYVLSKTRVLCKAETKHQFLGFMKKNYKLCSMRFDLHGNFNEEGGEEFMNPSIKKSGNLLDQLDICKVFQCDGLLLCVTKEENTRLVVWNPYSGQIRWIKCNNSYHRYEGYAIGYNNNRKHKILRFSDMSFSTYKIYDFISNSWRVLDIAPNWHINPDQRGASLKGNTYFFAREKREDEEDEDILWQPVEYLLCFDFTTENFGQLHPLPFEQYIDDAGALSSFGEEKLAALFQSFASSVVEIWVTSMIEANAVSWIPFLKVDMKPHCSFRFRLPFDGGSFFIDEEKKVAVVIHVDVVAESEMNRYEDVAYIIGENGYVKKVCLVEAVNQGGSLNLSKRSCCNYPHVCCSSYVPSLAQINQSVEFENEREEEEAN</sequence>
<comment type="sequence caution" evidence="1">
    <conflict type="erroneous gene model prediction">
        <sequence resource="EMBL-CDS" id="AED97345"/>
    </conflict>
</comment>
<evidence type="ECO:0000305" key="1"/>
<name>FB296_ARATH</name>
<gene>
    <name type="ordered locus">At5g60560</name>
    <name type="ORF">MUF9.19</name>
</gene>
<proteinExistence type="predicted"/>